<accession>B4EEQ6</accession>
<reference key="1">
    <citation type="journal article" date="2009" name="J. Bacteriol.">
        <title>The genome of Burkholderia cenocepacia J2315, an epidemic pathogen of cystic fibrosis patients.</title>
        <authorList>
            <person name="Holden M.T."/>
            <person name="Seth-Smith H.M."/>
            <person name="Crossman L.C."/>
            <person name="Sebaihia M."/>
            <person name="Bentley S.D."/>
            <person name="Cerdeno-Tarraga A.M."/>
            <person name="Thomson N.R."/>
            <person name="Bason N."/>
            <person name="Quail M.A."/>
            <person name="Sharp S."/>
            <person name="Cherevach I."/>
            <person name="Churcher C."/>
            <person name="Goodhead I."/>
            <person name="Hauser H."/>
            <person name="Holroyd N."/>
            <person name="Mungall K."/>
            <person name="Scott P."/>
            <person name="Walker D."/>
            <person name="White B."/>
            <person name="Rose H."/>
            <person name="Iversen P."/>
            <person name="Mil-Homens D."/>
            <person name="Rocha E.P."/>
            <person name="Fialho A.M."/>
            <person name="Baldwin A."/>
            <person name="Dowson C."/>
            <person name="Barrell B.G."/>
            <person name="Govan J.R."/>
            <person name="Vandamme P."/>
            <person name="Hart C.A."/>
            <person name="Mahenthiralingam E."/>
            <person name="Parkhill J."/>
        </authorList>
    </citation>
    <scope>NUCLEOTIDE SEQUENCE [LARGE SCALE GENOMIC DNA]</scope>
    <source>
        <strain>ATCC BAA-245 / DSM 16553 / LMG 16656 / NCTC 13227 / J2315 / CF5610</strain>
    </source>
</reference>
<gene>
    <name type="ordered locus">BceJ2315_22780</name>
    <name type="ORF">BCAL2318</name>
</gene>
<comment type="similarity">
    <text evidence="1">Belongs to the UPF0246 family.</text>
</comment>
<evidence type="ECO:0000255" key="1">
    <source>
        <dbReference type="HAMAP-Rule" id="MF_00652"/>
    </source>
</evidence>
<dbReference type="EMBL" id="AM747720">
    <property type="protein sequence ID" value="CAR52619.1"/>
    <property type="molecule type" value="Genomic_DNA"/>
</dbReference>
<dbReference type="SMR" id="B4EEQ6"/>
<dbReference type="KEGG" id="bcj:BCAL2318"/>
<dbReference type="eggNOG" id="COG3022">
    <property type="taxonomic scope" value="Bacteria"/>
</dbReference>
<dbReference type="HOGENOM" id="CLU_061989_0_0_4"/>
<dbReference type="BioCyc" id="BCEN216591:G1G1V-2561-MONOMER"/>
<dbReference type="Proteomes" id="UP000001035">
    <property type="component" value="Chromosome 1"/>
</dbReference>
<dbReference type="GO" id="GO:0005829">
    <property type="term" value="C:cytosol"/>
    <property type="evidence" value="ECO:0007669"/>
    <property type="project" value="TreeGrafter"/>
</dbReference>
<dbReference type="GO" id="GO:0033194">
    <property type="term" value="P:response to hydroperoxide"/>
    <property type="evidence" value="ECO:0007669"/>
    <property type="project" value="TreeGrafter"/>
</dbReference>
<dbReference type="HAMAP" id="MF_00652">
    <property type="entry name" value="UPF0246"/>
    <property type="match status" value="1"/>
</dbReference>
<dbReference type="InterPro" id="IPR005583">
    <property type="entry name" value="YaaA"/>
</dbReference>
<dbReference type="NCBIfam" id="NF002541">
    <property type="entry name" value="PRK02101.1-1"/>
    <property type="match status" value="1"/>
</dbReference>
<dbReference type="NCBIfam" id="NF002542">
    <property type="entry name" value="PRK02101.1-3"/>
    <property type="match status" value="1"/>
</dbReference>
<dbReference type="PANTHER" id="PTHR30283:SF4">
    <property type="entry name" value="PEROXIDE STRESS RESISTANCE PROTEIN YAAA"/>
    <property type="match status" value="1"/>
</dbReference>
<dbReference type="PANTHER" id="PTHR30283">
    <property type="entry name" value="PEROXIDE STRESS RESPONSE PROTEIN YAAA"/>
    <property type="match status" value="1"/>
</dbReference>
<dbReference type="Pfam" id="PF03883">
    <property type="entry name" value="H2O2_YaaD"/>
    <property type="match status" value="1"/>
</dbReference>
<sequence length="260" mass="29094">MIIVLSPAKSLDYDTPAHVPSYTLPAFVDDASELIHGLRKLSPQDIATLMDISDPLARLNFQRYADWSPTFTPANAKQAVLAFNGDVYEGFDAKSLSSTDLDYAQQHVRVLSGLYGLLRPLDLLQPYRLEMGTRFANARGKDLYAFWGDRITRALNEQLETRSGAARVLVNCASTEYFKSVKPKLLAAPVITPVFEDWKGGRYKIISFHAKRARGLMARFVVENRITDPKALKAFATEGYAFDAAASNDSTYVYRRRIGE</sequence>
<feature type="chain" id="PRO_1000131103" description="UPF0246 protein BceJ2315_22780">
    <location>
        <begin position="1"/>
        <end position="260"/>
    </location>
</feature>
<organism>
    <name type="scientific">Burkholderia cenocepacia (strain ATCC BAA-245 / DSM 16553 / LMG 16656 / NCTC 13227 / J2315 / CF5610)</name>
    <name type="common">Burkholderia cepacia (strain J2315)</name>
    <dbReference type="NCBI Taxonomy" id="216591"/>
    <lineage>
        <taxon>Bacteria</taxon>
        <taxon>Pseudomonadati</taxon>
        <taxon>Pseudomonadota</taxon>
        <taxon>Betaproteobacteria</taxon>
        <taxon>Burkholderiales</taxon>
        <taxon>Burkholderiaceae</taxon>
        <taxon>Burkholderia</taxon>
        <taxon>Burkholderia cepacia complex</taxon>
    </lineage>
</organism>
<name>Y2278_BURCJ</name>
<proteinExistence type="inferred from homology"/>
<protein>
    <recommendedName>
        <fullName evidence="1">UPF0246 protein BceJ2315_22780</fullName>
    </recommendedName>
</protein>